<protein>
    <recommendedName>
        <fullName evidence="1">Chaperonin GroEL 4</fullName>
        <ecNumber evidence="1">5.6.1.7</ecNumber>
    </recommendedName>
    <alternativeName>
        <fullName evidence="1">60 kDa chaperonin 4</fullName>
    </alternativeName>
    <alternativeName>
        <fullName evidence="1">Chaperonin-60 4</fullName>
        <shortName evidence="1">Cpn60 4</shortName>
    </alternativeName>
</protein>
<gene>
    <name evidence="1" type="primary">groEL4</name>
    <name evidence="1" type="synonym">groL4</name>
    <name type="ordered locus">Francci3_4398</name>
</gene>
<feature type="chain" id="PRO_0000256914" description="Chaperonin GroEL 4">
    <location>
        <begin position="1"/>
        <end position="540"/>
    </location>
</feature>
<feature type="binding site" evidence="1">
    <location>
        <begin position="29"/>
        <end position="32"/>
    </location>
    <ligand>
        <name>ATP</name>
        <dbReference type="ChEBI" id="CHEBI:30616"/>
    </ligand>
</feature>
<feature type="binding site" evidence="1">
    <location>
        <begin position="86"/>
        <end position="90"/>
    </location>
    <ligand>
        <name>ATP</name>
        <dbReference type="ChEBI" id="CHEBI:30616"/>
    </ligand>
</feature>
<feature type="binding site" evidence="1">
    <location>
        <position position="413"/>
    </location>
    <ligand>
        <name>ATP</name>
        <dbReference type="ChEBI" id="CHEBI:30616"/>
    </ligand>
</feature>
<feature type="binding site" evidence="1">
    <location>
        <begin position="477"/>
        <end position="479"/>
    </location>
    <ligand>
        <name>ATP</name>
        <dbReference type="ChEBI" id="CHEBI:30616"/>
    </ligand>
</feature>
<feature type="binding site" evidence="1">
    <location>
        <position position="493"/>
    </location>
    <ligand>
        <name>ATP</name>
        <dbReference type="ChEBI" id="CHEBI:30616"/>
    </ligand>
</feature>
<evidence type="ECO:0000255" key="1">
    <source>
        <dbReference type="HAMAP-Rule" id="MF_00600"/>
    </source>
</evidence>
<comment type="function">
    <text evidence="1">Together with its co-chaperonin GroES, plays an essential role in assisting protein folding. The GroEL-GroES system forms a nano-cage that allows encapsulation of the non-native substrate proteins and provides a physical environment optimized to promote and accelerate protein folding.</text>
</comment>
<comment type="catalytic activity">
    <reaction evidence="1">
        <text>ATP + H2O + a folded polypeptide = ADP + phosphate + an unfolded polypeptide.</text>
        <dbReference type="EC" id="5.6.1.7"/>
    </reaction>
</comment>
<comment type="subunit">
    <text evidence="1">Forms a cylinder of 14 subunits composed of two heptameric rings stacked back-to-back. Interacts with the co-chaperonin GroES.</text>
</comment>
<comment type="subcellular location">
    <subcellularLocation>
        <location evidence="1">Cytoplasm</location>
    </subcellularLocation>
</comment>
<comment type="similarity">
    <text evidence="1">Belongs to the chaperonin (HSP60) family.</text>
</comment>
<name>CH604_FRACC</name>
<dbReference type="EC" id="5.6.1.7" evidence="1"/>
<dbReference type="EMBL" id="CP000249">
    <property type="protein sequence ID" value="ABD13744.1"/>
    <property type="molecule type" value="Genomic_DNA"/>
</dbReference>
<dbReference type="SMR" id="Q2J4P8"/>
<dbReference type="STRING" id="106370.Francci3_4398"/>
<dbReference type="KEGG" id="fra:Francci3_4398"/>
<dbReference type="eggNOG" id="COG0459">
    <property type="taxonomic scope" value="Bacteria"/>
</dbReference>
<dbReference type="HOGENOM" id="CLU_016503_3_0_11"/>
<dbReference type="OrthoDB" id="9766614at2"/>
<dbReference type="PhylomeDB" id="Q2J4P8"/>
<dbReference type="Proteomes" id="UP000001937">
    <property type="component" value="Chromosome"/>
</dbReference>
<dbReference type="GO" id="GO:0005737">
    <property type="term" value="C:cytoplasm"/>
    <property type="evidence" value="ECO:0007669"/>
    <property type="project" value="UniProtKB-SubCell"/>
</dbReference>
<dbReference type="GO" id="GO:0005524">
    <property type="term" value="F:ATP binding"/>
    <property type="evidence" value="ECO:0007669"/>
    <property type="project" value="UniProtKB-UniRule"/>
</dbReference>
<dbReference type="GO" id="GO:0140662">
    <property type="term" value="F:ATP-dependent protein folding chaperone"/>
    <property type="evidence" value="ECO:0007669"/>
    <property type="project" value="InterPro"/>
</dbReference>
<dbReference type="GO" id="GO:0016853">
    <property type="term" value="F:isomerase activity"/>
    <property type="evidence" value="ECO:0007669"/>
    <property type="project" value="UniProtKB-KW"/>
</dbReference>
<dbReference type="GO" id="GO:0051082">
    <property type="term" value="F:unfolded protein binding"/>
    <property type="evidence" value="ECO:0007669"/>
    <property type="project" value="UniProtKB-UniRule"/>
</dbReference>
<dbReference type="GO" id="GO:0042026">
    <property type="term" value="P:protein refolding"/>
    <property type="evidence" value="ECO:0007669"/>
    <property type="project" value="UniProtKB-UniRule"/>
</dbReference>
<dbReference type="CDD" id="cd03344">
    <property type="entry name" value="GroEL"/>
    <property type="match status" value="1"/>
</dbReference>
<dbReference type="FunFam" id="3.50.7.10:FF:000001">
    <property type="entry name" value="60 kDa chaperonin"/>
    <property type="match status" value="1"/>
</dbReference>
<dbReference type="Gene3D" id="3.50.7.10">
    <property type="entry name" value="GroEL"/>
    <property type="match status" value="1"/>
</dbReference>
<dbReference type="Gene3D" id="1.10.560.10">
    <property type="entry name" value="GroEL-like equatorial domain"/>
    <property type="match status" value="1"/>
</dbReference>
<dbReference type="Gene3D" id="3.30.260.10">
    <property type="entry name" value="TCP-1-like chaperonin intermediate domain"/>
    <property type="match status" value="1"/>
</dbReference>
<dbReference type="HAMAP" id="MF_00600">
    <property type="entry name" value="CH60"/>
    <property type="match status" value="1"/>
</dbReference>
<dbReference type="InterPro" id="IPR018370">
    <property type="entry name" value="Chaperonin_Cpn60_CS"/>
</dbReference>
<dbReference type="InterPro" id="IPR001844">
    <property type="entry name" value="Cpn60/GroEL"/>
</dbReference>
<dbReference type="InterPro" id="IPR002423">
    <property type="entry name" value="Cpn60/GroEL/TCP-1"/>
</dbReference>
<dbReference type="InterPro" id="IPR027409">
    <property type="entry name" value="GroEL-like_apical_dom_sf"/>
</dbReference>
<dbReference type="InterPro" id="IPR027413">
    <property type="entry name" value="GROEL-like_equatorial_sf"/>
</dbReference>
<dbReference type="InterPro" id="IPR027410">
    <property type="entry name" value="TCP-1-like_intermed_sf"/>
</dbReference>
<dbReference type="NCBIfam" id="TIGR02348">
    <property type="entry name" value="GroEL"/>
    <property type="match status" value="1"/>
</dbReference>
<dbReference type="NCBIfam" id="NF000592">
    <property type="entry name" value="PRK00013.1"/>
    <property type="match status" value="1"/>
</dbReference>
<dbReference type="NCBIfam" id="NF009487">
    <property type="entry name" value="PRK12849.1"/>
    <property type="match status" value="1"/>
</dbReference>
<dbReference type="NCBIfam" id="NF009488">
    <property type="entry name" value="PRK12850.1"/>
    <property type="match status" value="1"/>
</dbReference>
<dbReference type="NCBIfam" id="NF009489">
    <property type="entry name" value="PRK12851.1"/>
    <property type="match status" value="1"/>
</dbReference>
<dbReference type="PANTHER" id="PTHR45633">
    <property type="entry name" value="60 KDA HEAT SHOCK PROTEIN, MITOCHONDRIAL"/>
    <property type="match status" value="1"/>
</dbReference>
<dbReference type="Pfam" id="PF00118">
    <property type="entry name" value="Cpn60_TCP1"/>
    <property type="match status" value="1"/>
</dbReference>
<dbReference type="PRINTS" id="PR00298">
    <property type="entry name" value="CHAPERONIN60"/>
</dbReference>
<dbReference type="SUPFAM" id="SSF52029">
    <property type="entry name" value="GroEL apical domain-like"/>
    <property type="match status" value="1"/>
</dbReference>
<dbReference type="SUPFAM" id="SSF48592">
    <property type="entry name" value="GroEL equatorial domain-like"/>
    <property type="match status" value="1"/>
</dbReference>
<dbReference type="SUPFAM" id="SSF54849">
    <property type="entry name" value="GroEL-intermediate domain like"/>
    <property type="match status" value="1"/>
</dbReference>
<dbReference type="PROSITE" id="PS00296">
    <property type="entry name" value="CHAPERONINS_CPN60"/>
    <property type="match status" value="1"/>
</dbReference>
<proteinExistence type="inferred from homology"/>
<accession>Q2J4P8</accession>
<reference key="1">
    <citation type="journal article" date="2007" name="Genome Res.">
        <title>Genome characteristics of facultatively symbiotic Frankia sp. strains reflect host range and host plant biogeography.</title>
        <authorList>
            <person name="Normand P."/>
            <person name="Lapierre P."/>
            <person name="Tisa L.S."/>
            <person name="Gogarten J.P."/>
            <person name="Alloisio N."/>
            <person name="Bagnarol E."/>
            <person name="Bassi C.A."/>
            <person name="Berry A.M."/>
            <person name="Bickhart D.M."/>
            <person name="Choisne N."/>
            <person name="Couloux A."/>
            <person name="Cournoyer B."/>
            <person name="Cruveiller S."/>
            <person name="Daubin V."/>
            <person name="Demange N."/>
            <person name="Francino M.P."/>
            <person name="Goltsman E."/>
            <person name="Huang Y."/>
            <person name="Kopp O.R."/>
            <person name="Labarre L."/>
            <person name="Lapidus A."/>
            <person name="Lavire C."/>
            <person name="Marechal J."/>
            <person name="Martinez M."/>
            <person name="Mastronunzio J.E."/>
            <person name="Mullin B.C."/>
            <person name="Niemann J."/>
            <person name="Pujic P."/>
            <person name="Rawnsley T."/>
            <person name="Rouy Z."/>
            <person name="Schenowitz C."/>
            <person name="Sellstedt A."/>
            <person name="Tavares F."/>
            <person name="Tomkins J.P."/>
            <person name="Vallenet D."/>
            <person name="Valverde C."/>
            <person name="Wall L.G."/>
            <person name="Wang Y."/>
            <person name="Medigue C."/>
            <person name="Benson D.R."/>
        </authorList>
    </citation>
    <scope>NUCLEOTIDE SEQUENCE [LARGE SCALE GENOMIC DNA]</scope>
    <source>
        <strain>DSM 45818 / CECT 9043 / HFP020203 / CcI3</strain>
    </source>
</reference>
<organism>
    <name type="scientific">Frankia casuarinae (strain DSM 45818 / CECT 9043 / HFP020203 / CcI3)</name>
    <dbReference type="NCBI Taxonomy" id="106370"/>
    <lineage>
        <taxon>Bacteria</taxon>
        <taxon>Bacillati</taxon>
        <taxon>Actinomycetota</taxon>
        <taxon>Actinomycetes</taxon>
        <taxon>Frankiales</taxon>
        <taxon>Frankiaceae</taxon>
        <taxon>Frankia</taxon>
    </lineage>
</organism>
<keyword id="KW-0067">ATP-binding</keyword>
<keyword id="KW-0143">Chaperone</keyword>
<keyword id="KW-0963">Cytoplasm</keyword>
<keyword id="KW-0413">Isomerase</keyword>
<keyword id="KW-0547">Nucleotide-binding</keyword>
<keyword id="KW-1185">Reference proteome</keyword>
<sequence>MPKIIAFDEEARRGLERGMNQLADAVKVTLGPKGRNVVLEKKWGVPTITNDGVSIAKEIELEDPYEKIGAELVKEVAKKTNDVAGDGTTTATILAQALVREGLRNVAAGANPLGLKKGIEVAVERVSEELSKQAKEVETKEQIASTASISAGDSAIGGLIAEALDKVGKEGVVTVEESNTFGLELELTEGMRFDKGYISPYFVTDADRQEAVLDDPYILIVNSKISAVKDLLPLLEKVMQTGKPLAIIAEDVEGEALATLVVNKIRGTFKSAAVKAPGFGDRRKAILGDIAILTGGQVISEDVGLKLESTSLDLLGRARKIVVTKDETTVVEGAGDPDQIAGRVSQIRNEIEKSDSDYDREKLQERLAKLAGGVAVIKVGAATEVELKEKKHRIEDAVSNAKAAVEEGIVAGGGVALLQASITAFEKLDLSGDEATGANIVRLALEAPIKQIAFNSGLEGGVVVEKVRNLPTGHGLNAATGEYVDLIGTGIIDPAKVTRSALQNAASIAGLFLTTEAVIADKPEKNPAPAVPGGGGDMDF</sequence>